<accession>Q5T754</accession>
<protein>
    <recommendedName>
        <fullName>Late cornified envelope protein 1F</fullName>
    </recommendedName>
    <alternativeName>
        <fullName>Late envelope protein 6</fullName>
    </alternativeName>
</protein>
<gene>
    <name type="primary">LCE1F</name>
    <name type="synonym">LEP6</name>
</gene>
<sequence>MSCQQSQQQCQPPPKCTPKCPPKCPTPKCPPKCPPKCPPVSSCCSVSSGGCCGSSSGGCCSSGGGGCCSSGGGGCCLSHHRRRRSHRHRPQSSDCCSQPSAGSSCCGGGSGQHSGGCC</sequence>
<evidence type="ECO:0000256" key="1">
    <source>
        <dbReference type="SAM" id="MobiDB-lite"/>
    </source>
</evidence>
<evidence type="ECO:0000269" key="2">
    <source>
    </source>
</evidence>
<evidence type="ECO:0000305" key="3"/>
<dbReference type="EMBL" id="AL353779">
    <property type="status" value="NOT_ANNOTATED_CDS"/>
    <property type="molecule type" value="Genomic_DNA"/>
</dbReference>
<dbReference type="CCDS" id="CCDS1023.1"/>
<dbReference type="RefSeq" id="NP_848131.1">
    <property type="nucleotide sequence ID" value="NM_178354.3"/>
</dbReference>
<dbReference type="BioGRID" id="131643">
    <property type="interactions" value="92"/>
</dbReference>
<dbReference type="FunCoup" id="Q5T754">
    <property type="interactions" value="27"/>
</dbReference>
<dbReference type="IntAct" id="Q5T754">
    <property type="interactions" value="71"/>
</dbReference>
<dbReference type="STRING" id="9606.ENSP00000334187"/>
<dbReference type="iPTMnet" id="Q5T754"/>
<dbReference type="PhosphoSitePlus" id="Q5T754"/>
<dbReference type="BioMuta" id="LCE1F"/>
<dbReference type="DMDM" id="74745324"/>
<dbReference type="MassIVE" id="Q5T754"/>
<dbReference type="PaxDb" id="9606-ENSP00000334187"/>
<dbReference type="PeptideAtlas" id="Q5T754"/>
<dbReference type="ProteomicsDB" id="64641"/>
<dbReference type="Pumba" id="Q5T754"/>
<dbReference type="Antibodypedia" id="82220">
    <property type="antibodies" value="1 antibodies from 1 providers"/>
</dbReference>
<dbReference type="DNASU" id="353137"/>
<dbReference type="Ensembl" id="ENST00000334371.4">
    <property type="protein sequence ID" value="ENSP00000334187.2"/>
    <property type="gene ID" value="ENSG00000240386.4"/>
</dbReference>
<dbReference type="GeneID" id="353137"/>
<dbReference type="KEGG" id="hsa:353137"/>
<dbReference type="MANE-Select" id="ENST00000334371.4">
    <property type="protein sequence ID" value="ENSP00000334187.2"/>
    <property type="RefSeq nucleotide sequence ID" value="NM_178354.3"/>
    <property type="RefSeq protein sequence ID" value="NP_848131.1"/>
</dbReference>
<dbReference type="UCSC" id="uc010pdv.3">
    <property type="organism name" value="human"/>
</dbReference>
<dbReference type="AGR" id="HGNC:29467"/>
<dbReference type="CTD" id="353137"/>
<dbReference type="GeneCards" id="LCE1F"/>
<dbReference type="HGNC" id="HGNC:29467">
    <property type="gene designation" value="LCE1F"/>
</dbReference>
<dbReference type="HPA" id="ENSG00000240386">
    <property type="expression patterns" value="Tissue enriched (skin)"/>
</dbReference>
<dbReference type="MIM" id="612608">
    <property type="type" value="gene"/>
</dbReference>
<dbReference type="neXtProt" id="NX_Q5T754"/>
<dbReference type="OpenTargets" id="ENSG00000240386"/>
<dbReference type="PharmGKB" id="PA134962947"/>
<dbReference type="VEuPathDB" id="HostDB:ENSG00000240386"/>
<dbReference type="eggNOG" id="ENOG502TFQW">
    <property type="taxonomic scope" value="Eukaryota"/>
</dbReference>
<dbReference type="GeneTree" id="ENSGT00950000183301"/>
<dbReference type="HOGENOM" id="CLU_152038_0_0_1"/>
<dbReference type="InParanoid" id="Q5T754"/>
<dbReference type="OMA" id="DCCGSEY"/>
<dbReference type="PAN-GO" id="Q5T754">
    <property type="GO annotations" value="0 GO annotations based on evolutionary models"/>
</dbReference>
<dbReference type="PathwayCommons" id="Q5T754"/>
<dbReference type="Reactome" id="R-HSA-6809371">
    <property type="pathway name" value="Formation of the cornified envelope"/>
</dbReference>
<dbReference type="SignaLink" id="Q5T754"/>
<dbReference type="BioGRID-ORCS" id="353137">
    <property type="hits" value="298 hits in 1042 CRISPR screens"/>
</dbReference>
<dbReference type="GenomeRNAi" id="353137"/>
<dbReference type="Pharos" id="Q5T754">
    <property type="development level" value="Tdark"/>
</dbReference>
<dbReference type="PRO" id="PR:Q5T754"/>
<dbReference type="Proteomes" id="UP000005640">
    <property type="component" value="Chromosome 1"/>
</dbReference>
<dbReference type="RNAct" id="Q5T754">
    <property type="molecule type" value="protein"/>
</dbReference>
<dbReference type="Bgee" id="ENSG00000240386">
    <property type="expression patterns" value="Expressed in skin of leg and 63 other cell types or tissues"/>
</dbReference>
<dbReference type="GO" id="GO:0042802">
    <property type="term" value="F:identical protein binding"/>
    <property type="evidence" value="ECO:0000353"/>
    <property type="project" value="IntAct"/>
</dbReference>
<dbReference type="GO" id="GO:0031424">
    <property type="term" value="P:keratinization"/>
    <property type="evidence" value="ECO:0007669"/>
    <property type="project" value="UniProtKB-KW"/>
</dbReference>
<dbReference type="InterPro" id="IPR028205">
    <property type="entry name" value="LCE"/>
</dbReference>
<dbReference type="Pfam" id="PF14672">
    <property type="entry name" value="LCE"/>
    <property type="match status" value="3"/>
</dbReference>
<dbReference type="PRINTS" id="PR00021">
    <property type="entry name" value="PRORICH"/>
</dbReference>
<reference key="1">
    <citation type="journal article" date="2006" name="Nature">
        <title>The DNA sequence and biological annotation of human chromosome 1.</title>
        <authorList>
            <person name="Gregory S.G."/>
            <person name="Barlow K.F."/>
            <person name="McLay K.E."/>
            <person name="Kaul R."/>
            <person name="Swarbreck D."/>
            <person name="Dunham A."/>
            <person name="Scott C.E."/>
            <person name="Howe K.L."/>
            <person name="Woodfine K."/>
            <person name="Spencer C.C.A."/>
            <person name="Jones M.C."/>
            <person name="Gillson C."/>
            <person name="Searle S."/>
            <person name="Zhou Y."/>
            <person name="Kokocinski F."/>
            <person name="McDonald L."/>
            <person name="Evans R."/>
            <person name="Phillips K."/>
            <person name="Atkinson A."/>
            <person name="Cooper R."/>
            <person name="Jones C."/>
            <person name="Hall R.E."/>
            <person name="Andrews T.D."/>
            <person name="Lloyd C."/>
            <person name="Ainscough R."/>
            <person name="Almeida J.P."/>
            <person name="Ambrose K.D."/>
            <person name="Anderson F."/>
            <person name="Andrew R.W."/>
            <person name="Ashwell R.I.S."/>
            <person name="Aubin K."/>
            <person name="Babbage A.K."/>
            <person name="Bagguley C.L."/>
            <person name="Bailey J."/>
            <person name="Beasley H."/>
            <person name="Bethel G."/>
            <person name="Bird C.P."/>
            <person name="Bray-Allen S."/>
            <person name="Brown J.Y."/>
            <person name="Brown A.J."/>
            <person name="Buckley D."/>
            <person name="Burton J."/>
            <person name="Bye J."/>
            <person name="Carder C."/>
            <person name="Chapman J.C."/>
            <person name="Clark S.Y."/>
            <person name="Clarke G."/>
            <person name="Clee C."/>
            <person name="Cobley V."/>
            <person name="Collier R.E."/>
            <person name="Corby N."/>
            <person name="Coville G.J."/>
            <person name="Davies J."/>
            <person name="Deadman R."/>
            <person name="Dunn M."/>
            <person name="Earthrowl M."/>
            <person name="Ellington A.G."/>
            <person name="Errington H."/>
            <person name="Frankish A."/>
            <person name="Frankland J."/>
            <person name="French L."/>
            <person name="Garner P."/>
            <person name="Garnett J."/>
            <person name="Gay L."/>
            <person name="Ghori M.R.J."/>
            <person name="Gibson R."/>
            <person name="Gilby L.M."/>
            <person name="Gillett W."/>
            <person name="Glithero R.J."/>
            <person name="Grafham D.V."/>
            <person name="Griffiths C."/>
            <person name="Griffiths-Jones S."/>
            <person name="Grocock R."/>
            <person name="Hammond S."/>
            <person name="Harrison E.S.I."/>
            <person name="Hart E."/>
            <person name="Haugen E."/>
            <person name="Heath P.D."/>
            <person name="Holmes S."/>
            <person name="Holt K."/>
            <person name="Howden P.J."/>
            <person name="Hunt A.R."/>
            <person name="Hunt S.E."/>
            <person name="Hunter G."/>
            <person name="Isherwood J."/>
            <person name="James R."/>
            <person name="Johnson C."/>
            <person name="Johnson D."/>
            <person name="Joy A."/>
            <person name="Kay M."/>
            <person name="Kershaw J.K."/>
            <person name="Kibukawa M."/>
            <person name="Kimberley A.M."/>
            <person name="King A."/>
            <person name="Knights A.J."/>
            <person name="Lad H."/>
            <person name="Laird G."/>
            <person name="Lawlor S."/>
            <person name="Leongamornlert D.A."/>
            <person name="Lloyd D.M."/>
            <person name="Loveland J."/>
            <person name="Lovell J."/>
            <person name="Lush M.J."/>
            <person name="Lyne R."/>
            <person name="Martin S."/>
            <person name="Mashreghi-Mohammadi M."/>
            <person name="Matthews L."/>
            <person name="Matthews N.S.W."/>
            <person name="McLaren S."/>
            <person name="Milne S."/>
            <person name="Mistry S."/>
            <person name="Moore M.J.F."/>
            <person name="Nickerson T."/>
            <person name="O'Dell C.N."/>
            <person name="Oliver K."/>
            <person name="Palmeiri A."/>
            <person name="Palmer S.A."/>
            <person name="Parker A."/>
            <person name="Patel D."/>
            <person name="Pearce A.V."/>
            <person name="Peck A.I."/>
            <person name="Pelan S."/>
            <person name="Phelps K."/>
            <person name="Phillimore B.J."/>
            <person name="Plumb R."/>
            <person name="Rajan J."/>
            <person name="Raymond C."/>
            <person name="Rouse G."/>
            <person name="Saenphimmachak C."/>
            <person name="Sehra H.K."/>
            <person name="Sheridan E."/>
            <person name="Shownkeen R."/>
            <person name="Sims S."/>
            <person name="Skuce C.D."/>
            <person name="Smith M."/>
            <person name="Steward C."/>
            <person name="Subramanian S."/>
            <person name="Sycamore N."/>
            <person name="Tracey A."/>
            <person name="Tromans A."/>
            <person name="Van Helmond Z."/>
            <person name="Wall M."/>
            <person name="Wallis J.M."/>
            <person name="White S."/>
            <person name="Whitehead S.L."/>
            <person name="Wilkinson J.E."/>
            <person name="Willey D.L."/>
            <person name="Williams H."/>
            <person name="Wilming L."/>
            <person name="Wray P.W."/>
            <person name="Wu Z."/>
            <person name="Coulson A."/>
            <person name="Vaudin M."/>
            <person name="Sulston J.E."/>
            <person name="Durbin R.M."/>
            <person name="Hubbard T."/>
            <person name="Wooster R."/>
            <person name="Dunham I."/>
            <person name="Carter N.P."/>
            <person name="McVean G."/>
            <person name="Ross M.T."/>
            <person name="Harrow J."/>
            <person name="Olson M.V."/>
            <person name="Beck S."/>
            <person name="Rogers J."/>
            <person name="Bentley D.R."/>
        </authorList>
    </citation>
    <scope>NUCLEOTIDE SEQUENCE [LARGE SCALE GENOMIC DNA]</scope>
</reference>
<reference key="2">
    <citation type="journal article" date="2005" name="J. Invest. Dermatol.">
        <title>Late cornified envelope family in differentiating epithelia -- response to calcium and ultraviolet irradiation.</title>
        <authorList>
            <person name="Jackson B."/>
            <person name="Tilli C.L."/>
            <person name="Hardman M."/>
            <person name="Avilion A."/>
            <person name="Macleod M."/>
            <person name="Ashcroft G."/>
            <person name="Byrne C."/>
        </authorList>
    </citation>
    <scope>NOMENCLATURE</scope>
    <scope>TISSUE SPECIFICITY</scope>
    <scope>INDUCTION BY UVB</scope>
</reference>
<keyword id="KW-0417">Keratinization</keyword>
<keyword id="KW-1267">Proteomics identification</keyword>
<keyword id="KW-1185">Reference proteome</keyword>
<organism>
    <name type="scientific">Homo sapiens</name>
    <name type="common">Human</name>
    <dbReference type="NCBI Taxonomy" id="9606"/>
    <lineage>
        <taxon>Eukaryota</taxon>
        <taxon>Metazoa</taxon>
        <taxon>Chordata</taxon>
        <taxon>Craniata</taxon>
        <taxon>Vertebrata</taxon>
        <taxon>Euteleostomi</taxon>
        <taxon>Mammalia</taxon>
        <taxon>Eutheria</taxon>
        <taxon>Euarchontoglires</taxon>
        <taxon>Primates</taxon>
        <taxon>Haplorrhini</taxon>
        <taxon>Catarrhini</taxon>
        <taxon>Hominidae</taxon>
        <taxon>Homo</taxon>
    </lineage>
</organism>
<feature type="chain" id="PRO_0000235329" description="Late cornified envelope protein 1F">
    <location>
        <begin position="1"/>
        <end position="118"/>
    </location>
</feature>
<feature type="region of interest" description="Disordered" evidence="1">
    <location>
        <begin position="1"/>
        <end position="23"/>
    </location>
</feature>
<feature type="region of interest" description="Disordered" evidence="1">
    <location>
        <begin position="82"/>
        <end position="118"/>
    </location>
</feature>
<feature type="compositionally biased region" description="Low complexity" evidence="1">
    <location>
        <begin position="1"/>
        <end position="10"/>
    </location>
</feature>
<feature type="compositionally biased region" description="Pro residues" evidence="1">
    <location>
        <begin position="11"/>
        <end position="23"/>
    </location>
</feature>
<feature type="compositionally biased region" description="Low complexity" evidence="1">
    <location>
        <begin position="95"/>
        <end position="104"/>
    </location>
</feature>
<feature type="compositionally biased region" description="Gly residues" evidence="1">
    <location>
        <begin position="105"/>
        <end position="118"/>
    </location>
</feature>
<name>LCE1F_HUMAN</name>
<comment type="function">
    <text>Precursors of the cornified envelope of the stratum corneum.</text>
</comment>
<comment type="interaction">
    <interactant intactId="EBI-11958008">
        <id>Q5T754</id>
    </interactant>
    <interactant intactId="EBI-10173507">
        <id>Q6UY14-3</id>
        <label>ADAMTSL4</label>
    </interactant>
    <organismsDiffer>false</organismsDiffer>
    <experiments>3</experiments>
</comment>
<comment type="interaction">
    <interactant intactId="EBI-11958008">
        <id>Q5T754</id>
    </interactant>
    <interactant intactId="EBI-1211484">
        <id>P05187</id>
        <label>ALPP</label>
    </interactant>
    <organismsDiffer>false</organismsDiffer>
    <experiments>3</experiments>
</comment>
<comment type="interaction">
    <interactant intactId="EBI-11958008">
        <id>Q5T754</id>
    </interactant>
    <interactant intactId="EBI-744545">
        <id>Q8NEC5</id>
        <label>CATSPER1</label>
    </interactant>
    <organismsDiffer>false</organismsDiffer>
    <experiments>3</experiments>
</comment>
<comment type="interaction">
    <interactant intactId="EBI-11958008">
        <id>Q5T754</id>
    </interactant>
    <interactant intactId="EBI-741528">
        <id>Q9UKJ5</id>
        <label>CHIC2</label>
    </interactant>
    <organismsDiffer>false</organismsDiffer>
    <experiments>3</experiments>
</comment>
<comment type="interaction">
    <interactant intactId="EBI-11958008">
        <id>Q5T754</id>
    </interactant>
    <interactant intactId="EBI-947551">
        <id>Q9H2X0</id>
        <label>CHRD</label>
    </interactant>
    <organismsDiffer>false</organismsDiffer>
    <experiments>3</experiments>
</comment>
<comment type="interaction">
    <interactant intactId="EBI-11958008">
        <id>Q5T754</id>
    </interactant>
    <interactant intactId="EBI-713677">
        <id>Q9UGL9</id>
        <label>CRCT1</label>
    </interactant>
    <organismsDiffer>false</organismsDiffer>
    <experiments>3</experiments>
</comment>
<comment type="interaction">
    <interactant intactId="EBI-11958008">
        <id>Q5T754</id>
    </interactant>
    <interactant intactId="EBI-14156412">
        <id>Q08AG9</id>
        <label>CYP21A2</label>
    </interactant>
    <organismsDiffer>false</organismsDiffer>
    <experiments>3</experiments>
</comment>
<comment type="interaction">
    <interactant intactId="EBI-11958008">
        <id>Q5T754</id>
    </interactant>
    <interactant intactId="EBI-3867333">
        <id>A8MQ03</id>
        <label>CYSRT1</label>
    </interactant>
    <organismsDiffer>false</organismsDiffer>
    <experiments>6</experiments>
</comment>
<comment type="interaction">
    <interactant intactId="EBI-11958008">
        <id>Q5T754</id>
    </interactant>
    <interactant intactId="EBI-11956479">
        <id>P23142-4</id>
        <label>FBLN1</label>
    </interactant>
    <organismsDiffer>false</organismsDiffer>
    <experiments>3</experiments>
</comment>
<comment type="interaction">
    <interactant intactId="EBI-11958008">
        <id>Q5T754</id>
    </interactant>
    <interactant intactId="EBI-740785">
        <id>P49639</id>
        <label>HOXA1</label>
    </interactant>
    <organismsDiffer>false</organismsDiffer>
    <experiments>6</experiments>
</comment>
<comment type="interaction">
    <interactant intactId="EBI-11958008">
        <id>Q5T754</id>
    </interactant>
    <interactant intactId="EBI-948761">
        <id>Q6ZMJ4</id>
        <label>IL34</label>
    </interactant>
    <organismsDiffer>false</organismsDiffer>
    <experiments>3</experiments>
</comment>
<comment type="interaction">
    <interactant intactId="EBI-11958008">
        <id>Q5T754</id>
    </interactant>
    <interactant intactId="EBI-11959885">
        <id>Q07627</id>
        <label>KRTAP1-1</label>
    </interactant>
    <organismsDiffer>false</organismsDiffer>
    <experiments>3</experiments>
</comment>
<comment type="interaction">
    <interactant intactId="EBI-11958008">
        <id>Q5T754</id>
    </interactant>
    <interactant intactId="EBI-11749135">
        <id>Q8IUG1</id>
        <label>KRTAP1-3</label>
    </interactant>
    <organismsDiffer>false</organismsDiffer>
    <experiments>3</experiments>
</comment>
<comment type="interaction">
    <interactant intactId="EBI-11958008">
        <id>Q5T754</id>
    </interactant>
    <interactant intactId="EBI-11955579">
        <id>P60014</id>
        <label>KRTAP10-10</label>
    </interactant>
    <organismsDiffer>false</organismsDiffer>
    <experiments>3</experiments>
</comment>
<comment type="interaction">
    <interactant intactId="EBI-11958008">
        <id>Q5T754</id>
    </interactant>
    <interactant intactId="EBI-12012928">
        <id>P60371</id>
        <label>KRTAP10-6</label>
    </interactant>
    <organismsDiffer>false</organismsDiffer>
    <experiments>3</experiments>
</comment>
<comment type="interaction">
    <interactant intactId="EBI-11958008">
        <id>Q5T754</id>
    </interactant>
    <interactant intactId="EBI-10172290">
        <id>P60409</id>
        <label>KRTAP10-7</label>
    </interactant>
    <organismsDiffer>false</organismsDiffer>
    <experiments>5</experiments>
</comment>
<comment type="interaction">
    <interactant intactId="EBI-11958008">
        <id>Q5T754</id>
    </interactant>
    <interactant intactId="EBI-10171774">
        <id>P60410</id>
        <label>KRTAP10-8</label>
    </interactant>
    <organismsDiffer>false</organismsDiffer>
    <experiments>6</experiments>
</comment>
<comment type="interaction">
    <interactant intactId="EBI-11958008">
        <id>Q5T754</id>
    </interactant>
    <interactant intactId="EBI-10172052">
        <id>P60411</id>
        <label>KRTAP10-9</label>
    </interactant>
    <organismsDiffer>false</organismsDiffer>
    <experiments>5</experiments>
</comment>
<comment type="interaction">
    <interactant intactId="EBI-11958008">
        <id>Q5T754</id>
    </interactant>
    <interactant intactId="EBI-1052037">
        <id>Q8IUC1</id>
        <label>KRTAP11-1</label>
    </interactant>
    <organismsDiffer>false</organismsDiffer>
    <experiments>3</experiments>
</comment>
<comment type="interaction">
    <interactant intactId="EBI-11958008">
        <id>Q5T754</id>
    </interactant>
    <interactant intactId="EBI-10210845">
        <id>P59990</id>
        <label>KRTAP12-1</label>
    </interactant>
    <organismsDiffer>false</organismsDiffer>
    <experiments>3</experiments>
</comment>
<comment type="interaction">
    <interactant intactId="EBI-11958008">
        <id>Q5T754</id>
    </interactant>
    <interactant intactId="EBI-10176379">
        <id>P59991</id>
        <label>KRTAP12-2</label>
    </interactant>
    <organismsDiffer>false</organismsDiffer>
    <experiments>3</experiments>
</comment>
<comment type="interaction">
    <interactant intactId="EBI-11958008">
        <id>Q5T754</id>
    </interactant>
    <interactant intactId="EBI-11953334">
        <id>P60328</id>
        <label>KRTAP12-3</label>
    </interactant>
    <organismsDiffer>false</organismsDiffer>
    <experiments>7</experiments>
</comment>
<comment type="interaction">
    <interactant intactId="EBI-11958008">
        <id>Q5T754</id>
    </interactant>
    <interactant intactId="EBI-10176396">
        <id>P60329</id>
        <label>KRTAP12-4</label>
    </interactant>
    <organismsDiffer>false</organismsDiffer>
    <experiments>3</experiments>
</comment>
<comment type="interaction">
    <interactant intactId="EBI-11958008">
        <id>Q5T754</id>
    </interactant>
    <interactant intactId="EBI-14065470">
        <id>Q9BYR9</id>
        <label>KRTAP2-4</label>
    </interactant>
    <organismsDiffer>false</organismsDiffer>
    <experiments>6</experiments>
</comment>
<comment type="interaction">
    <interactant intactId="EBI-11958008">
        <id>Q5T754</id>
    </interactant>
    <interactant intactId="EBI-751260">
        <id>Q9BYR7</id>
        <label>KRTAP3-2</label>
    </interactant>
    <organismsDiffer>false</organismsDiffer>
    <experiments>3</experiments>
</comment>
<comment type="interaction">
    <interactant intactId="EBI-11958008">
        <id>Q5T754</id>
    </interactant>
    <interactant intactId="EBI-3957694">
        <id>Q9BYR6</id>
        <label>KRTAP3-3</label>
    </interactant>
    <organismsDiffer>false</organismsDiffer>
    <experiments>3</experiments>
</comment>
<comment type="interaction">
    <interactant intactId="EBI-11958008">
        <id>Q5T754</id>
    </interactant>
    <interactant intactId="EBI-10302392">
        <id>Q9BYQ6</id>
        <label>KRTAP4-11</label>
    </interactant>
    <organismsDiffer>false</organismsDiffer>
    <experiments>3</experiments>
</comment>
<comment type="interaction">
    <interactant intactId="EBI-11958008">
        <id>Q5T754</id>
    </interactant>
    <interactant intactId="EBI-739863">
        <id>Q9BQ66</id>
        <label>KRTAP4-12</label>
    </interactant>
    <organismsDiffer>false</organismsDiffer>
    <experiments>6</experiments>
</comment>
<comment type="interaction">
    <interactant intactId="EBI-11958008">
        <id>Q5T754</id>
    </interactant>
    <interactant intactId="EBI-11958132">
        <id>Q9BYR3</id>
        <label>KRTAP4-4</label>
    </interactant>
    <organismsDiffer>false</organismsDiffer>
    <experiments>6</experiments>
</comment>
<comment type="interaction">
    <interactant intactId="EBI-11958008">
        <id>Q5T754</id>
    </interactant>
    <interactant intactId="EBI-11993254">
        <id>Q9BYR2</id>
        <label>KRTAP4-5</label>
    </interactant>
    <organismsDiffer>false</organismsDiffer>
    <experiments>3</experiments>
</comment>
<comment type="interaction">
    <interactant intactId="EBI-11958008">
        <id>Q5T754</id>
    </interactant>
    <interactant intactId="EBI-11993296">
        <id>Q6L8G4</id>
        <label>KRTAP5-11</label>
    </interactant>
    <organismsDiffer>false</organismsDiffer>
    <experiments>3</experiments>
</comment>
<comment type="interaction">
    <interactant intactId="EBI-11958008">
        <id>Q5T754</id>
    </interactant>
    <interactant intactId="EBI-11958178">
        <id>Q701N4</id>
        <label>KRTAP5-2</label>
    </interactant>
    <organismsDiffer>false</organismsDiffer>
    <experiments>3</experiments>
</comment>
<comment type="interaction">
    <interactant intactId="EBI-11958008">
        <id>Q5T754</id>
    </interactant>
    <interactant intactId="EBI-11974251">
        <id>Q6L8H2</id>
        <label>KRTAP5-3</label>
    </interactant>
    <organismsDiffer>false</organismsDiffer>
    <experiments>3</experiments>
</comment>
<comment type="interaction">
    <interactant intactId="EBI-11958008">
        <id>Q5T754</id>
    </interactant>
    <interactant intactId="EBI-11963072">
        <id>Q6L8H1</id>
        <label>KRTAP5-4</label>
    </interactant>
    <organismsDiffer>false</organismsDiffer>
    <experiments>3</experiments>
</comment>
<comment type="interaction">
    <interactant intactId="EBI-11958008">
        <id>Q5T754</id>
    </interactant>
    <interactant intactId="EBI-10250562">
        <id>Q6L8G9</id>
        <label>KRTAP5-6</label>
    </interactant>
    <organismsDiffer>false</organismsDiffer>
    <experiments>3</experiments>
</comment>
<comment type="interaction">
    <interactant intactId="EBI-11958008">
        <id>Q5T754</id>
    </interactant>
    <interactant intactId="EBI-3958099">
        <id>P26371</id>
        <label>KRTAP5-9</label>
    </interactant>
    <organismsDiffer>false</organismsDiffer>
    <experiments>6</experiments>
</comment>
<comment type="interaction">
    <interactant intactId="EBI-11958008">
        <id>Q5T754</id>
    </interactant>
    <interactant intactId="EBI-22311199">
        <id>Q3LI67</id>
        <label>KRTAP6-3</label>
    </interactant>
    <organismsDiffer>false</organismsDiffer>
    <experiments>6</experiments>
</comment>
<comment type="interaction">
    <interactant intactId="EBI-11958008">
        <id>Q5T754</id>
    </interactant>
    <interactant intactId="EBI-1044640">
        <id>Q9BYQ4</id>
        <label>KRTAP9-2</label>
    </interactant>
    <organismsDiffer>false</organismsDiffer>
    <experiments>3</experiments>
</comment>
<comment type="interaction">
    <interactant intactId="EBI-11958008">
        <id>Q5T754</id>
    </interactant>
    <interactant intactId="EBI-1043191">
        <id>Q9BYQ3</id>
        <label>KRTAP9-3</label>
    </interactant>
    <organismsDiffer>false</organismsDiffer>
    <experiments>6</experiments>
</comment>
<comment type="interaction">
    <interactant intactId="EBI-11958008">
        <id>Q5T754</id>
    </interactant>
    <interactant intactId="EBI-11958364">
        <id>Q9BYQ0</id>
        <label>KRTAP9-8</label>
    </interactant>
    <organismsDiffer>false</organismsDiffer>
    <experiments>6</experiments>
</comment>
<comment type="interaction">
    <interactant intactId="EBI-11958008">
        <id>Q5T754</id>
    </interactant>
    <interactant intactId="EBI-11962058">
        <id>Q5T7P2</id>
        <label>LCE1A</label>
    </interactant>
    <organismsDiffer>false</organismsDiffer>
    <experiments>3</experiments>
</comment>
<comment type="interaction">
    <interactant intactId="EBI-11958008">
        <id>Q5T754</id>
    </interactant>
    <interactant intactId="EBI-10245913">
        <id>Q5T7P3</id>
        <label>LCE1B</label>
    </interactant>
    <organismsDiffer>false</organismsDiffer>
    <experiments>3</experiments>
</comment>
<comment type="interaction">
    <interactant intactId="EBI-11958008">
        <id>Q5T754</id>
    </interactant>
    <interactant intactId="EBI-12224199">
        <id>Q5T751</id>
        <label>LCE1C</label>
    </interactant>
    <organismsDiffer>false</organismsDiffer>
    <experiments>3</experiments>
</comment>
<comment type="interaction">
    <interactant intactId="EBI-11958008">
        <id>Q5T754</id>
    </interactant>
    <interactant intactId="EBI-11741311">
        <id>Q5T752</id>
        <label>LCE1D</label>
    </interactant>
    <organismsDiffer>false</organismsDiffer>
    <experiments>3</experiments>
</comment>
<comment type="interaction">
    <interactant intactId="EBI-11958008">
        <id>Q5T754</id>
    </interactant>
    <interactant intactId="EBI-11955335">
        <id>Q5T753</id>
        <label>LCE1E</label>
    </interactant>
    <organismsDiffer>false</organismsDiffer>
    <experiments>6</experiments>
</comment>
<comment type="interaction">
    <interactant intactId="EBI-11958008">
        <id>Q5T754</id>
    </interactant>
    <interactant intactId="EBI-11958008">
        <id>Q5T754</id>
        <label>LCE1F</label>
    </interactant>
    <organismsDiffer>false</organismsDiffer>
    <experiments>3</experiments>
</comment>
<comment type="interaction">
    <interactant intactId="EBI-11958008">
        <id>Q5T754</id>
    </interactant>
    <interactant intactId="EBI-11478468">
        <id>O14633</id>
        <label>LCE2B</label>
    </interactant>
    <organismsDiffer>false</organismsDiffer>
    <experiments>5</experiments>
</comment>
<comment type="interaction">
    <interactant intactId="EBI-11958008">
        <id>Q5T754</id>
    </interactant>
    <interactant intactId="EBI-11973993">
        <id>Q5TA81</id>
        <label>LCE2C</label>
    </interactant>
    <organismsDiffer>false</organismsDiffer>
    <experiments>6</experiments>
</comment>
<comment type="interaction">
    <interactant intactId="EBI-11958008">
        <id>Q5T754</id>
    </interactant>
    <interactant intactId="EBI-10246750">
        <id>Q5TA82</id>
        <label>LCE2D</label>
    </interactant>
    <organismsDiffer>false</organismsDiffer>
    <experiments>3</experiments>
</comment>
<comment type="interaction">
    <interactant intactId="EBI-11958008">
        <id>Q5T754</id>
    </interactant>
    <interactant intactId="EBI-11974495">
        <id>Q5TA77</id>
        <label>LCE3B</label>
    </interactant>
    <organismsDiffer>false</organismsDiffer>
    <experiments>6</experiments>
</comment>
<comment type="interaction">
    <interactant intactId="EBI-11958008">
        <id>Q5T754</id>
    </interactant>
    <interactant intactId="EBI-11955689">
        <id>Q5TCM9</id>
        <label>LCE5A</label>
    </interactant>
    <organismsDiffer>false</organismsDiffer>
    <experiments>3</experiments>
</comment>
<comment type="interaction">
    <interactant intactId="EBI-11958008">
        <id>Q5T754</id>
    </interactant>
    <interactant intactId="EBI-2683507">
        <id>Q8N5G2</id>
        <label>MACO1</label>
    </interactant>
    <organismsDiffer>false</organismsDiffer>
    <experiments>3</experiments>
</comment>
<comment type="interaction">
    <interactant intactId="EBI-11958008">
        <id>Q5T754</id>
    </interactant>
    <interactant intactId="EBI-724076">
        <id>Q99750</id>
        <label>MDFI</label>
    </interactant>
    <organismsDiffer>false</organismsDiffer>
    <experiments>3</experiments>
</comment>
<comment type="interaction">
    <interactant intactId="EBI-11958008">
        <id>Q5T754</id>
    </interactant>
    <interactant intactId="EBI-22310682">
        <id>P0DPK4</id>
        <label>NOTCH2NLC</label>
    </interactant>
    <organismsDiffer>false</organismsDiffer>
    <experiments>3</experiments>
</comment>
<comment type="interaction">
    <interactant intactId="EBI-11958008">
        <id>Q5T754</id>
    </interactant>
    <interactant intactId="EBI-741158">
        <id>Q96HA8</id>
        <label>NTAQ1</label>
    </interactant>
    <organismsDiffer>false</organismsDiffer>
    <experiments>3</experiments>
</comment>
<comment type="interaction">
    <interactant intactId="EBI-11958008">
        <id>Q5T754</id>
    </interactant>
    <interactant intactId="EBI-10277776">
        <id>Q8WWZ8</id>
        <label>OIT3</label>
    </interactant>
    <organismsDiffer>false</organismsDiffer>
    <experiments>3</experiments>
</comment>
<comment type="interaction">
    <interactant intactId="EBI-11958008">
        <id>Q5T754</id>
    </interactant>
    <interactant intactId="EBI-740446">
        <id>P32242</id>
        <label>OTX1</label>
    </interactant>
    <organismsDiffer>false</organismsDiffer>
    <experiments>3</experiments>
</comment>
<comment type="interaction">
    <interactant intactId="EBI-11958008">
        <id>Q5T754</id>
    </interactant>
    <interactant intactId="EBI-11956269">
        <id>Q92824-2</id>
        <label>PCSK5</label>
    </interactant>
    <organismsDiffer>false</organismsDiffer>
    <experiments>3</experiments>
</comment>
<comment type="interaction">
    <interactant intactId="EBI-11958008">
        <id>Q5T754</id>
    </interactant>
    <interactant intactId="EBI-17236143">
        <id>Q12837</id>
        <label>POU4F2</label>
    </interactant>
    <organismsDiffer>false</organismsDiffer>
    <experiments>3</experiments>
</comment>
<comment type="interaction">
    <interactant intactId="EBI-11958008">
        <id>Q5T754</id>
    </interactant>
    <interactant intactId="EBI-372273">
        <id>P20618</id>
        <label>PSMB1</label>
    </interactant>
    <organismsDiffer>false</organismsDiffer>
    <experiments>3</experiments>
</comment>
<comment type="interaction">
    <interactant intactId="EBI-11958008">
        <id>Q5T754</id>
    </interactant>
    <interactant intactId="EBI-948156">
        <id>Q9Y4B4</id>
        <label>RAD54L2</label>
    </interactant>
    <organismsDiffer>false</organismsDiffer>
    <experiments>3</experiments>
</comment>
<comment type="interaction">
    <interactant intactId="EBI-11958008">
        <id>Q5T754</id>
    </interactant>
    <interactant intactId="EBI-10178530">
        <id>O76081-6</id>
        <label>RGS20</label>
    </interactant>
    <organismsDiffer>false</organismsDiffer>
    <experiments>3</experiments>
</comment>
<comment type="interaction">
    <interactant intactId="EBI-11958008">
        <id>Q5T754</id>
    </interactant>
    <interactant intactId="EBI-2340927">
        <id>P78317</id>
        <label>RNF4</label>
    </interactant>
    <organismsDiffer>false</organismsDiffer>
    <experiments>3</experiments>
</comment>
<comment type="interaction">
    <interactant intactId="EBI-11958008">
        <id>Q5T754</id>
    </interactant>
    <interactant intactId="EBI-1051105">
        <id>Q92504</id>
        <label>SLC39A7</label>
    </interactant>
    <organismsDiffer>false</organismsDiffer>
    <experiments>3</experiments>
</comment>
<comment type="interaction">
    <interactant intactId="EBI-11958008">
        <id>Q5T754</id>
    </interactant>
    <interactant intactId="EBI-750494">
        <id>P49901</id>
        <label>SMCP</label>
    </interactant>
    <organismsDiffer>false</organismsDiffer>
    <experiments>3</experiments>
</comment>
<comment type="interaction">
    <interactant intactId="EBI-11958008">
        <id>Q5T754</id>
    </interactant>
    <interactant intactId="EBI-3866665">
        <id>O43609</id>
        <label>SPRY1</label>
    </interactant>
    <organismsDiffer>false</organismsDiffer>
    <experiments>3</experiments>
</comment>
<comment type="interaction">
    <interactant intactId="EBI-11958008">
        <id>Q5T754</id>
    </interactant>
    <interactant intactId="EBI-12290641">
        <id>O43610</id>
        <label>SPRY3</label>
    </interactant>
    <organismsDiffer>false</organismsDiffer>
    <experiments>3</experiments>
</comment>
<comment type="interaction">
    <interactant intactId="EBI-11958008">
        <id>Q5T754</id>
    </interactant>
    <interactant intactId="EBI-5235829">
        <id>Q8IWZ5</id>
        <label>TRIM42</label>
    </interactant>
    <organismsDiffer>false</organismsDiffer>
    <experiments>6</experiments>
</comment>
<comment type="interaction">
    <interactant intactId="EBI-11958008">
        <id>Q5T754</id>
    </interactant>
    <interactant intactId="EBI-10180829">
        <id>Q7KZS0</id>
        <label>UBE2I</label>
    </interactant>
    <organismsDiffer>false</organismsDiffer>
    <experiments>3</experiments>
</comment>
<comment type="interaction">
    <interactant intactId="EBI-11958008">
        <id>Q5T754</id>
    </interactant>
    <interactant intactId="EBI-11957238">
        <id>Q2TAL6</id>
        <label>VWC2</label>
    </interactant>
    <organismsDiffer>false</organismsDiffer>
    <experiments>3</experiments>
</comment>
<comment type="interaction">
    <interactant intactId="EBI-11958008">
        <id>Q5T754</id>
    </interactant>
    <interactant intactId="EBI-7963932">
        <id>Q8IUB2</id>
        <label>WFDC3</label>
    </interactant>
    <organismsDiffer>false</organismsDiffer>
    <experiments>3</experiments>
</comment>
<comment type="interaction">
    <interactant intactId="EBI-11958008">
        <id>Q5T754</id>
    </interactant>
    <interactant intactId="EBI-9088990">
        <id>Q7Z783</id>
    </interactant>
    <organismsDiffer>false</organismsDiffer>
    <experiments>3</experiments>
</comment>
<comment type="tissue specificity">
    <text evidence="2">Skin-specific. Expression was readily detected in adult trunk skin, adult arm skin, fetal skin, penal skin, vulva, esophagus and tongue. Not expressed in the cervix, rectum, lung, colon, or placenta. Expression is observed in the fibroblasts.</text>
</comment>
<comment type="induction">
    <text evidence="2">By UVB.</text>
</comment>
<comment type="miscellaneous">
    <text>Belongs to the LCE cluster present on 1q21.</text>
</comment>
<comment type="similarity">
    <text evidence="3">Belongs to the LCE family.</text>
</comment>
<proteinExistence type="evidence at protein level"/>